<comment type="function">
    <text evidence="1">Photosystem II (PSII) is a light-driven water:plastoquinone oxidoreductase that uses light energy to abstract electrons from H(2)O, generating O(2) and a proton gradient subsequently used for ATP formation. It consists of a core antenna complex that captures photons, and an electron transfer chain that converts photonic excitation into a charge separation. The D1/D2 (PsbA/PsbD) reaction center heterodimer binds P680, the primary electron donor of PSII as well as several subsequent electron acceptors.</text>
</comment>
<comment type="catalytic activity">
    <reaction evidence="1">
        <text>2 a plastoquinone + 4 hnu + 2 H2O = 2 a plastoquinol + O2</text>
        <dbReference type="Rhea" id="RHEA:36359"/>
        <dbReference type="Rhea" id="RHEA-COMP:9561"/>
        <dbReference type="Rhea" id="RHEA-COMP:9562"/>
        <dbReference type="ChEBI" id="CHEBI:15377"/>
        <dbReference type="ChEBI" id="CHEBI:15379"/>
        <dbReference type="ChEBI" id="CHEBI:17757"/>
        <dbReference type="ChEBI" id="CHEBI:30212"/>
        <dbReference type="ChEBI" id="CHEBI:62192"/>
        <dbReference type="EC" id="1.10.3.9"/>
    </reaction>
</comment>
<comment type="cofactor">
    <text evidence="1">The D1/D2 heterodimer binds P680, chlorophylls that are the primary electron donor of PSII, and subsequent electron acceptors. It shares a non-heme iron and each subunit binds pheophytin, quinone, additional chlorophylls, carotenoids and lipids. D1 provides most of the ligands for the Mn4-Ca-O5 cluster of the oxygen-evolving complex (OEC). There is also a Cl(-1) ion associated with D1 and D2, which is required for oxygen evolution. The PSII complex binds additional chlorophylls, carotenoids and specific lipids.</text>
</comment>
<comment type="subunit">
    <text evidence="1">PSII is composed of 1 copy each of membrane proteins PsbA, PsbB, PsbC, PsbD, PsbE, PsbF, PsbH, PsbI, PsbJ, PsbK, PsbL, PsbM, PsbT, PsbX, PsbY, PsbZ, Psb30/Ycf12, peripheral proteins PsbO, CyanoQ (PsbQ), PsbU, PsbV and a large number of cofactors. It forms dimeric complexes.</text>
</comment>
<comment type="subcellular location">
    <subcellularLocation>
        <location evidence="1">Cellular thylakoid membrane</location>
        <topology evidence="1">Multi-pass membrane protein</topology>
    </subcellularLocation>
</comment>
<comment type="PTM">
    <text evidence="1">Tyr-161 forms a radical intermediate that is referred to as redox-active TyrZ, YZ or Y-Z.</text>
</comment>
<comment type="PTM">
    <text evidence="1">C-terminally processed by CtpA; processing is essential to allow assembly of the oxygen-evolving complex and thus photosynthetic growth.</text>
</comment>
<comment type="miscellaneous">
    <text evidence="1">Cyanobacteria usually contain more than 2 copies of the psbA gene.</text>
</comment>
<comment type="miscellaneous">
    <text evidence="1">2 of the reaction center chlorophylls (ChlD1 and ChlD2) are entirely coordinated by water.</text>
</comment>
<comment type="miscellaneous">
    <text evidence="1">Herbicides such as atrazine, BNT, diuron or ioxynil bind in the Q(B) binding site and block subsequent electron transfer.</text>
</comment>
<comment type="similarity">
    <text evidence="1">Belongs to the reaction center PufL/M/PsbA/D family.</text>
</comment>
<feature type="chain" id="PRO_0000316402" description="Photosystem II protein D1 2" evidence="1">
    <location>
        <begin position="1"/>
        <end position="344"/>
    </location>
</feature>
<feature type="propeptide" id="PRO_0000316403" evidence="1">
    <location>
        <begin position="345"/>
        <end position="354"/>
    </location>
</feature>
<feature type="transmembrane region" description="Helical" evidence="1">
    <location>
        <begin position="29"/>
        <end position="46"/>
    </location>
</feature>
<feature type="transmembrane region" description="Helical" evidence="1">
    <location>
        <begin position="118"/>
        <end position="133"/>
    </location>
</feature>
<feature type="transmembrane region" description="Helical" evidence="1">
    <location>
        <begin position="142"/>
        <end position="156"/>
    </location>
</feature>
<feature type="transmembrane region" description="Helical" evidence="1">
    <location>
        <begin position="197"/>
        <end position="218"/>
    </location>
</feature>
<feature type="transmembrane region" description="Helical" evidence="1">
    <location>
        <begin position="274"/>
        <end position="288"/>
    </location>
</feature>
<feature type="binding site" description="axial binding residue" evidence="1">
    <location>
        <position position="118"/>
    </location>
    <ligand>
        <name>chlorophyll a</name>
        <dbReference type="ChEBI" id="CHEBI:58416"/>
        <label>ChlzD1</label>
    </ligand>
    <ligandPart>
        <name>Mg</name>
        <dbReference type="ChEBI" id="CHEBI:25107"/>
    </ligandPart>
</feature>
<feature type="binding site" evidence="1">
    <location>
        <position position="126"/>
    </location>
    <ligand>
        <name>pheophytin a</name>
        <dbReference type="ChEBI" id="CHEBI:136840"/>
        <label>D1</label>
    </ligand>
</feature>
<feature type="binding site" evidence="1">
    <location>
        <position position="170"/>
    </location>
    <ligand>
        <name>[CaMn4O5] cluster</name>
        <dbReference type="ChEBI" id="CHEBI:189552"/>
    </ligand>
</feature>
<feature type="binding site" evidence="1">
    <location>
        <position position="189"/>
    </location>
    <ligand>
        <name>[CaMn4O5] cluster</name>
        <dbReference type="ChEBI" id="CHEBI:189552"/>
    </ligand>
</feature>
<feature type="binding site" description="axial binding residue" evidence="1">
    <location>
        <position position="198"/>
    </location>
    <ligand>
        <name>chlorophyll a</name>
        <dbReference type="ChEBI" id="CHEBI:58416"/>
        <label>PD1</label>
    </ligand>
    <ligandPart>
        <name>Mg</name>
        <dbReference type="ChEBI" id="CHEBI:25107"/>
    </ligandPart>
</feature>
<feature type="binding site" evidence="1">
    <location>
        <position position="215"/>
    </location>
    <ligand>
        <name>a quinone</name>
        <dbReference type="ChEBI" id="CHEBI:132124"/>
        <label>B</label>
    </ligand>
</feature>
<feature type="binding site" evidence="1">
    <location>
        <position position="215"/>
    </location>
    <ligand>
        <name>Fe cation</name>
        <dbReference type="ChEBI" id="CHEBI:24875"/>
        <note>ligand shared with heterodimeric partner</note>
    </ligand>
</feature>
<feature type="binding site" evidence="1">
    <location>
        <begin position="264"/>
        <end position="265"/>
    </location>
    <ligand>
        <name>a quinone</name>
        <dbReference type="ChEBI" id="CHEBI:132124"/>
        <label>B</label>
    </ligand>
</feature>
<feature type="binding site" evidence="1">
    <location>
        <position position="272"/>
    </location>
    <ligand>
        <name>Fe cation</name>
        <dbReference type="ChEBI" id="CHEBI:24875"/>
        <note>ligand shared with heterodimeric partner</note>
    </ligand>
</feature>
<feature type="binding site" evidence="1">
    <location>
        <position position="332"/>
    </location>
    <ligand>
        <name>[CaMn4O5] cluster</name>
        <dbReference type="ChEBI" id="CHEBI:189552"/>
    </ligand>
</feature>
<feature type="binding site" evidence="1">
    <location>
        <position position="333"/>
    </location>
    <ligand>
        <name>[CaMn4O5] cluster</name>
        <dbReference type="ChEBI" id="CHEBI:189552"/>
    </ligand>
</feature>
<feature type="binding site" evidence="1">
    <location>
        <position position="342"/>
    </location>
    <ligand>
        <name>[CaMn4O5] cluster</name>
        <dbReference type="ChEBI" id="CHEBI:189552"/>
    </ligand>
</feature>
<feature type="binding site" evidence="1">
    <location>
        <position position="344"/>
    </location>
    <ligand>
        <name>[CaMn4O5] cluster</name>
        <dbReference type="ChEBI" id="CHEBI:189552"/>
    </ligand>
</feature>
<feature type="site" description="Tyrosine radical intermediate" evidence="1">
    <location>
        <position position="161"/>
    </location>
</feature>
<feature type="site" description="Stabilizes free radical intermediate" evidence="1">
    <location>
        <position position="190"/>
    </location>
</feature>
<feature type="site" description="Cleavage; by CtpA" evidence="1">
    <location>
        <begin position="344"/>
        <end position="345"/>
    </location>
</feature>
<gene>
    <name evidence="1 2" type="primary">psbA2</name>
    <name type="ordered locus">CYB_0371</name>
</gene>
<gene>
    <name evidence="1 2" type="primary">psbA3</name>
    <name type="ordered locus">CYB_0433</name>
</gene>
<name>PSBA2_SYNJB</name>
<dbReference type="EC" id="1.10.3.9" evidence="1"/>
<dbReference type="EMBL" id="CP000240">
    <property type="protein sequence ID" value="ABD01367.1"/>
    <property type="molecule type" value="Genomic_DNA"/>
</dbReference>
<dbReference type="EMBL" id="CP000240">
    <property type="protein sequence ID" value="ABD01428.1"/>
    <property type="molecule type" value="Genomic_DNA"/>
</dbReference>
<dbReference type="SMR" id="Q2JP67"/>
<dbReference type="STRING" id="321332.CYB_0371"/>
<dbReference type="KEGG" id="cyb:CYB_0371"/>
<dbReference type="KEGG" id="cyb:CYB_0433"/>
<dbReference type="eggNOG" id="ENOG502Z87P">
    <property type="taxonomic scope" value="Bacteria"/>
</dbReference>
<dbReference type="HOGENOM" id="CLU_054206_1_0_3"/>
<dbReference type="OrthoDB" id="505356at2"/>
<dbReference type="Proteomes" id="UP000001938">
    <property type="component" value="Chromosome"/>
</dbReference>
<dbReference type="GO" id="GO:0009523">
    <property type="term" value="C:photosystem II"/>
    <property type="evidence" value="ECO:0007669"/>
    <property type="project" value="UniProtKB-KW"/>
</dbReference>
<dbReference type="GO" id="GO:0031676">
    <property type="term" value="C:plasma membrane-derived thylakoid membrane"/>
    <property type="evidence" value="ECO:0007669"/>
    <property type="project" value="UniProtKB-SubCell"/>
</dbReference>
<dbReference type="GO" id="GO:0016168">
    <property type="term" value="F:chlorophyll binding"/>
    <property type="evidence" value="ECO:0007669"/>
    <property type="project" value="UniProtKB-UniRule"/>
</dbReference>
<dbReference type="GO" id="GO:0045156">
    <property type="term" value="F:electron transporter, transferring electrons within the cyclic electron transport pathway of photosynthesis activity"/>
    <property type="evidence" value="ECO:0007669"/>
    <property type="project" value="InterPro"/>
</dbReference>
<dbReference type="GO" id="GO:0005506">
    <property type="term" value="F:iron ion binding"/>
    <property type="evidence" value="ECO:0007669"/>
    <property type="project" value="UniProtKB-UniRule"/>
</dbReference>
<dbReference type="GO" id="GO:0016682">
    <property type="term" value="F:oxidoreductase activity, acting on diphenols and related substances as donors, oxygen as acceptor"/>
    <property type="evidence" value="ECO:0007669"/>
    <property type="project" value="UniProtKB-UniRule"/>
</dbReference>
<dbReference type="GO" id="GO:0010242">
    <property type="term" value="F:oxygen evolving activity"/>
    <property type="evidence" value="ECO:0007669"/>
    <property type="project" value="UniProtKB-EC"/>
</dbReference>
<dbReference type="GO" id="GO:0009772">
    <property type="term" value="P:photosynthetic electron transport in photosystem II"/>
    <property type="evidence" value="ECO:0007669"/>
    <property type="project" value="InterPro"/>
</dbReference>
<dbReference type="GO" id="GO:0009635">
    <property type="term" value="P:response to herbicide"/>
    <property type="evidence" value="ECO:0007669"/>
    <property type="project" value="UniProtKB-KW"/>
</dbReference>
<dbReference type="CDD" id="cd09289">
    <property type="entry name" value="Photosystem-II_D1"/>
    <property type="match status" value="1"/>
</dbReference>
<dbReference type="FunFam" id="1.20.85.10:FF:000002">
    <property type="entry name" value="Photosystem II protein D1"/>
    <property type="match status" value="1"/>
</dbReference>
<dbReference type="Gene3D" id="1.20.85.10">
    <property type="entry name" value="Photosystem II protein D1-like"/>
    <property type="match status" value="1"/>
</dbReference>
<dbReference type="HAMAP" id="MF_01379">
    <property type="entry name" value="PSII_PsbA_D1"/>
    <property type="match status" value="1"/>
</dbReference>
<dbReference type="InterPro" id="IPR055266">
    <property type="entry name" value="D1/D2"/>
</dbReference>
<dbReference type="InterPro" id="IPR036854">
    <property type="entry name" value="Photo_II_D1/D2_sf"/>
</dbReference>
<dbReference type="InterPro" id="IPR000484">
    <property type="entry name" value="Photo_RC_L/M"/>
</dbReference>
<dbReference type="InterPro" id="IPR055265">
    <property type="entry name" value="Photo_RC_L/M_CS"/>
</dbReference>
<dbReference type="InterPro" id="IPR005867">
    <property type="entry name" value="PSII_D1"/>
</dbReference>
<dbReference type="NCBIfam" id="TIGR01151">
    <property type="entry name" value="psbA"/>
    <property type="match status" value="1"/>
</dbReference>
<dbReference type="PANTHER" id="PTHR33149:SF12">
    <property type="entry name" value="PHOTOSYSTEM II D2 PROTEIN"/>
    <property type="match status" value="1"/>
</dbReference>
<dbReference type="PANTHER" id="PTHR33149">
    <property type="entry name" value="PHOTOSYSTEM II PROTEIN D1"/>
    <property type="match status" value="1"/>
</dbReference>
<dbReference type="Pfam" id="PF00124">
    <property type="entry name" value="Photo_RC"/>
    <property type="match status" value="1"/>
</dbReference>
<dbReference type="PRINTS" id="PR00256">
    <property type="entry name" value="REACTNCENTRE"/>
</dbReference>
<dbReference type="SUPFAM" id="SSF81483">
    <property type="entry name" value="Bacterial photosystem II reaction centre, L and M subunits"/>
    <property type="match status" value="1"/>
</dbReference>
<dbReference type="PROSITE" id="PS00244">
    <property type="entry name" value="REACTION_CENTER"/>
    <property type="match status" value="1"/>
</dbReference>
<proteinExistence type="inferred from homology"/>
<reference key="1">
    <citation type="journal article" date="2007" name="ISME J.">
        <title>Population level functional diversity in a microbial community revealed by comparative genomic and metagenomic analyses.</title>
        <authorList>
            <person name="Bhaya D."/>
            <person name="Grossman A.R."/>
            <person name="Steunou A.-S."/>
            <person name="Khuri N."/>
            <person name="Cohan F.M."/>
            <person name="Hamamura N."/>
            <person name="Melendrez M.C."/>
            <person name="Bateson M.M."/>
            <person name="Ward D.M."/>
            <person name="Heidelberg J.F."/>
        </authorList>
    </citation>
    <scope>NUCLEOTIDE SEQUENCE [LARGE SCALE GENOMIC DNA]</scope>
    <source>
        <strain>JA-2-3B'a(2-13)</strain>
    </source>
</reference>
<keyword id="KW-0106">Calcium</keyword>
<keyword id="KW-0148">Chlorophyll</keyword>
<keyword id="KW-0157">Chromophore</keyword>
<keyword id="KW-0249">Electron transport</keyword>
<keyword id="KW-0359">Herbicide resistance</keyword>
<keyword id="KW-0408">Iron</keyword>
<keyword id="KW-0460">Magnesium</keyword>
<keyword id="KW-0464">Manganese</keyword>
<keyword id="KW-0472">Membrane</keyword>
<keyword id="KW-0479">Metal-binding</keyword>
<keyword id="KW-0560">Oxidoreductase</keyword>
<keyword id="KW-0602">Photosynthesis</keyword>
<keyword id="KW-0604">Photosystem II</keyword>
<keyword id="KW-1185">Reference proteome</keyword>
<keyword id="KW-0793">Thylakoid</keyword>
<keyword id="KW-0812">Transmembrane</keyword>
<keyword id="KW-1133">Transmembrane helix</keyword>
<keyword id="KW-0813">Transport</keyword>
<accession>Q2JP67</accession>
<evidence type="ECO:0000255" key="1">
    <source>
        <dbReference type="HAMAP-Rule" id="MF_01379"/>
    </source>
</evidence>
<evidence type="ECO:0000305" key="2"/>
<sequence>MTTVIQRRSTSNVWEQFCEWVTSTDNRLYIGWFGVLMIPTLLTATTCFIIAFIGAPPVDIDGIREPVSGSLLYGNNIISGAVVPSSAAIGLHFYPIWEAASLDEWLYNGGPYQLIVLHFLIGVFCYMGREWELSYRLGMRPWIAVAYSAPVAAATAVFLIYPIGQGSFSDGMPLGISGTFNFMLVFQAEHNILMHPFHQLGVAGVFGGALFSAMHGSLVTSSLIRETSEEESQNLGYKFGQEEETYNIVAAHGYFGRLIFQYASFNNSRSLHFFLAAWPVIGIWFTALGISIMAFNLNGFNFNQSIVDSNGRVVGTWADVLNRANLGMEVMHERNAHNFPLDLAAVEVAPAVRG</sequence>
<organism>
    <name type="scientific">Synechococcus sp. (strain JA-2-3B'a(2-13))</name>
    <name type="common">Cyanobacteria bacterium Yellowstone B-Prime</name>
    <dbReference type="NCBI Taxonomy" id="321332"/>
    <lineage>
        <taxon>Bacteria</taxon>
        <taxon>Bacillati</taxon>
        <taxon>Cyanobacteriota</taxon>
        <taxon>Cyanophyceae</taxon>
        <taxon>Synechococcales</taxon>
        <taxon>Synechococcaceae</taxon>
        <taxon>Synechococcus</taxon>
    </lineage>
</organism>
<protein>
    <recommendedName>
        <fullName evidence="1">Photosystem II protein D1 2</fullName>
        <shortName evidence="1">PSII D1 protein 2</shortName>
        <ecNumber evidence="1">1.10.3.9</ecNumber>
    </recommendedName>
    <alternativeName>
        <fullName evidence="1">Photosystem II Q(B) protein 2</fullName>
    </alternativeName>
</protein>